<keyword id="KW-1003">Cell membrane</keyword>
<keyword id="KW-0342">GTP-binding</keyword>
<keyword id="KW-0449">Lipoprotein</keyword>
<keyword id="KW-0472">Membrane</keyword>
<keyword id="KW-0547">Nucleotide-binding</keyword>
<keyword id="KW-0636">Prenylation</keyword>
<keyword id="KW-0653">Protein transport</keyword>
<keyword id="KW-0813">Transport</keyword>
<organism>
    <name type="scientific">Volvox carteri</name>
    <name type="common">Green alga</name>
    <dbReference type="NCBI Taxonomy" id="3067"/>
    <lineage>
        <taxon>Eukaryota</taxon>
        <taxon>Viridiplantae</taxon>
        <taxon>Chlorophyta</taxon>
        <taxon>core chlorophytes</taxon>
        <taxon>Chlorophyceae</taxon>
        <taxon>CS clade</taxon>
        <taxon>Chlamydomonadales</taxon>
        <taxon>Volvocaceae</taxon>
        <taxon>Volvox</taxon>
    </lineage>
</organism>
<name>YPTV1_VOLCA</name>
<proteinExistence type="inferred from homology"/>
<accession>P31584</accession>
<protein>
    <recommendedName>
        <fullName>GTP-binding protein yptV1</fullName>
    </recommendedName>
</protein>
<evidence type="ECO:0000250" key="1"/>
<evidence type="ECO:0000250" key="2">
    <source>
        <dbReference type="UniProtKB" id="P01123"/>
    </source>
</evidence>
<evidence type="ECO:0000250" key="3">
    <source>
        <dbReference type="UniProtKB" id="P62820"/>
    </source>
</evidence>
<evidence type="ECO:0000256" key="4">
    <source>
        <dbReference type="SAM" id="MobiDB-lite"/>
    </source>
</evidence>
<evidence type="ECO:0000305" key="5"/>
<gene>
    <name type="primary">YPTV1</name>
</gene>
<comment type="function">
    <text evidence="1">Protein transport. Probably involved in vesicular traffic (By similarity).</text>
</comment>
<comment type="subcellular location">
    <subcellularLocation>
        <location evidence="5">Cell membrane</location>
        <topology evidence="5">Lipid-anchor</topology>
        <orientation evidence="5">Cytoplasmic side</orientation>
    </subcellularLocation>
</comment>
<comment type="similarity">
    <text evidence="5">Belongs to the small GTPase superfamily. Rab family.</text>
</comment>
<sequence>MNPEYDYLFKLLLIGDSGVGKSCLLLRFADDTYTESYISTIGVDFKIRTVELDGKVIKLQIWDTAGQERFRTITSSYYRGAHGIIVVYDVTDQESFNNVKQWLAEIDRYASENVNKLLVGNKSDLTGKKVVDYQAAKAFADEIGIPFLETSAKNATNVEQAFMTMAAEIKNRMASQPVPPKPGGPVVRPTEGKPINNKSSSCC</sequence>
<dbReference type="EMBL" id="M93438">
    <property type="protein sequence ID" value="AAA34255.1"/>
    <property type="molecule type" value="Genomic_DNA"/>
</dbReference>
<dbReference type="PIR" id="JC1247">
    <property type="entry name" value="JC1247"/>
</dbReference>
<dbReference type="SMR" id="P31584"/>
<dbReference type="KEGG" id="vcn:VOLCADRAFT_104295"/>
<dbReference type="OMA" id="IPHVEIS"/>
<dbReference type="GO" id="GO:0005886">
    <property type="term" value="C:plasma membrane"/>
    <property type="evidence" value="ECO:0007669"/>
    <property type="project" value="UniProtKB-SubCell"/>
</dbReference>
<dbReference type="GO" id="GO:0005525">
    <property type="term" value="F:GTP binding"/>
    <property type="evidence" value="ECO:0007669"/>
    <property type="project" value="UniProtKB-KW"/>
</dbReference>
<dbReference type="GO" id="GO:0003924">
    <property type="term" value="F:GTPase activity"/>
    <property type="evidence" value="ECO:0007669"/>
    <property type="project" value="InterPro"/>
</dbReference>
<dbReference type="GO" id="GO:0015031">
    <property type="term" value="P:protein transport"/>
    <property type="evidence" value="ECO:0007669"/>
    <property type="project" value="UniProtKB-KW"/>
</dbReference>
<dbReference type="CDD" id="cd01869">
    <property type="entry name" value="Rab1_Ypt1"/>
    <property type="match status" value="1"/>
</dbReference>
<dbReference type="FunFam" id="3.40.50.300:FF:000069">
    <property type="entry name" value="Ras GTP-binding protein YPT1"/>
    <property type="match status" value="1"/>
</dbReference>
<dbReference type="Gene3D" id="3.40.50.300">
    <property type="entry name" value="P-loop containing nucleotide triphosphate hydrolases"/>
    <property type="match status" value="1"/>
</dbReference>
<dbReference type="InterPro" id="IPR027417">
    <property type="entry name" value="P-loop_NTPase"/>
</dbReference>
<dbReference type="InterPro" id="IPR050227">
    <property type="entry name" value="Rab"/>
</dbReference>
<dbReference type="InterPro" id="IPR005225">
    <property type="entry name" value="Small_GTP-bd"/>
</dbReference>
<dbReference type="InterPro" id="IPR001806">
    <property type="entry name" value="Small_GTPase"/>
</dbReference>
<dbReference type="NCBIfam" id="TIGR00231">
    <property type="entry name" value="small_GTP"/>
    <property type="match status" value="1"/>
</dbReference>
<dbReference type="PANTHER" id="PTHR47977">
    <property type="entry name" value="RAS-RELATED PROTEIN RAB"/>
    <property type="match status" value="1"/>
</dbReference>
<dbReference type="Pfam" id="PF00071">
    <property type="entry name" value="Ras"/>
    <property type="match status" value="1"/>
</dbReference>
<dbReference type="PRINTS" id="PR00449">
    <property type="entry name" value="RASTRNSFRMNG"/>
</dbReference>
<dbReference type="SMART" id="SM00175">
    <property type="entry name" value="RAB"/>
    <property type="match status" value="1"/>
</dbReference>
<dbReference type="SMART" id="SM00176">
    <property type="entry name" value="RAN"/>
    <property type="match status" value="1"/>
</dbReference>
<dbReference type="SMART" id="SM00173">
    <property type="entry name" value="RAS"/>
    <property type="match status" value="1"/>
</dbReference>
<dbReference type="SMART" id="SM00174">
    <property type="entry name" value="RHO"/>
    <property type="match status" value="1"/>
</dbReference>
<dbReference type="SUPFAM" id="SSF52540">
    <property type="entry name" value="P-loop containing nucleoside triphosphate hydrolases"/>
    <property type="match status" value="1"/>
</dbReference>
<dbReference type="PROSITE" id="PS51419">
    <property type="entry name" value="RAB"/>
    <property type="match status" value="1"/>
</dbReference>
<feature type="chain" id="PRO_0000121300" description="GTP-binding protein yptV1">
    <location>
        <begin position="1"/>
        <end position="203"/>
    </location>
</feature>
<feature type="region of interest" description="Disordered" evidence="4">
    <location>
        <begin position="173"/>
        <end position="203"/>
    </location>
</feature>
<feature type="short sequence motif" description="Effector region" evidence="5">
    <location>
        <begin position="37"/>
        <end position="45"/>
    </location>
</feature>
<feature type="binding site" evidence="3">
    <location>
        <begin position="15"/>
        <end position="23"/>
    </location>
    <ligand>
        <name>GTP</name>
        <dbReference type="ChEBI" id="CHEBI:37565"/>
    </ligand>
</feature>
<feature type="binding site" evidence="3">
    <location>
        <begin position="33"/>
        <end position="40"/>
    </location>
    <ligand>
        <name>GTP</name>
        <dbReference type="ChEBI" id="CHEBI:37565"/>
    </ligand>
</feature>
<feature type="binding site" evidence="3">
    <location>
        <begin position="63"/>
        <end position="67"/>
    </location>
    <ligand>
        <name>GTP</name>
        <dbReference type="ChEBI" id="CHEBI:37565"/>
    </ligand>
</feature>
<feature type="binding site" evidence="3">
    <location>
        <begin position="121"/>
        <end position="124"/>
    </location>
    <ligand>
        <name>GTP</name>
        <dbReference type="ChEBI" id="CHEBI:37565"/>
    </ligand>
</feature>
<feature type="binding site" evidence="3">
    <location>
        <begin position="151"/>
        <end position="153"/>
    </location>
    <ligand>
        <name>GTP</name>
        <dbReference type="ChEBI" id="CHEBI:37565"/>
    </ligand>
</feature>
<feature type="lipid moiety-binding region" description="S-geranylgeranyl cysteine" evidence="2">
    <location>
        <position position="202"/>
    </location>
</feature>
<feature type="lipid moiety-binding region" description="S-geranylgeranyl cysteine" evidence="2">
    <location>
        <position position="203"/>
    </location>
</feature>
<reference key="1">
    <citation type="journal article" date="1992" name="Gene">
        <title>The yptV1 gene encodes a small G-protein in the green alga Volvox carteri: gene structure and properties of the gene product.</title>
        <authorList>
            <person name="Fabry S."/>
            <person name="Nass N."/>
            <person name="Huber H."/>
            <person name="Palme K."/>
            <person name="Jaenicke L."/>
            <person name="Schmitt R."/>
        </authorList>
    </citation>
    <scope>NUCLEOTIDE SEQUENCE [GENOMIC DNA]</scope>
    <source>
        <strain>f. Nagariensis / HK10</strain>
    </source>
</reference>